<name>AA1R_RABIT</name>
<reference key="1">
    <citation type="journal article" date="1993" name="Gene">
        <title>Cloning of an adenosine A1 receptor-encoding gene from rabbit.</title>
        <authorList>
            <person name="Bhattacharya S."/>
            <person name="Dewitt D.L."/>
            <person name="Burnatowska-Hledin M."/>
            <person name="Smith W.L."/>
            <person name="Spielman W.S."/>
        </authorList>
    </citation>
    <scope>NUCLEOTIDE SEQUENCE [MRNA]</scope>
    <source>
        <tissue>Kidney</tissue>
    </source>
</reference>
<feature type="chain" id="PRO_0000068993" description="Adenosine receptor A1">
    <location>
        <begin position="1"/>
        <end position="328"/>
    </location>
</feature>
<feature type="topological domain" description="Extracellular" evidence="1">
    <location>
        <begin position="1"/>
        <end position="10"/>
    </location>
</feature>
<feature type="transmembrane region" description="Helical; Name=1" evidence="1">
    <location>
        <begin position="11"/>
        <end position="33"/>
    </location>
</feature>
<feature type="topological domain" description="Cytoplasmic" evidence="1">
    <location>
        <begin position="34"/>
        <end position="46"/>
    </location>
</feature>
<feature type="transmembrane region" description="Helical; Name=2" evidence="1">
    <location>
        <begin position="47"/>
        <end position="69"/>
    </location>
</feature>
<feature type="topological domain" description="Extracellular" evidence="1">
    <location>
        <begin position="70"/>
        <end position="80"/>
    </location>
</feature>
<feature type="transmembrane region" description="Helical; Name=3" evidence="1">
    <location>
        <begin position="81"/>
        <end position="102"/>
    </location>
</feature>
<feature type="topological domain" description="Cytoplasmic" evidence="1">
    <location>
        <begin position="103"/>
        <end position="123"/>
    </location>
</feature>
<feature type="transmembrane region" description="Helical; Name=4" evidence="1">
    <location>
        <begin position="124"/>
        <end position="146"/>
    </location>
</feature>
<feature type="topological domain" description="Extracellular" evidence="1">
    <location>
        <begin position="147"/>
        <end position="176"/>
    </location>
</feature>
<feature type="transmembrane region" description="Helical; Name=5" evidence="1">
    <location>
        <begin position="177"/>
        <end position="201"/>
    </location>
</feature>
<feature type="topological domain" description="Cytoplasmic" evidence="1">
    <location>
        <begin position="202"/>
        <end position="235"/>
    </location>
</feature>
<feature type="transmembrane region" description="Helical; Name=6" evidence="1">
    <location>
        <begin position="236"/>
        <end position="259"/>
    </location>
</feature>
<feature type="topological domain" description="Extracellular" evidence="1">
    <location>
        <begin position="260"/>
        <end position="267"/>
    </location>
</feature>
<feature type="transmembrane region" description="Helical; Name=7" evidence="1">
    <location>
        <begin position="268"/>
        <end position="292"/>
    </location>
</feature>
<feature type="topological domain" description="Cytoplasmic" evidence="1">
    <location>
        <begin position="293"/>
        <end position="328"/>
    </location>
</feature>
<feature type="lipid moiety-binding region" description="S-palmitoyl cysteine" evidence="1">
    <location>
        <position position="309"/>
    </location>
</feature>
<feature type="glycosylation site" description="N-linked (GlcNAc...) asparagine" evidence="1">
    <location>
        <position position="159"/>
    </location>
</feature>
<feature type="disulfide bond" evidence="2">
    <location>
        <begin position="80"/>
        <end position="169"/>
    </location>
</feature>
<accession>P34970</accession>
<proteinExistence type="evidence at transcript level"/>
<gene>
    <name type="primary">ADORA1</name>
</gene>
<evidence type="ECO:0000255" key="1"/>
<evidence type="ECO:0000255" key="2">
    <source>
        <dbReference type="PROSITE-ProRule" id="PRU00521"/>
    </source>
</evidence>
<comment type="function">
    <text>Receptor for adenosine. The activity of this receptor is mediated by G proteins which inhibit adenylyl cyclase.</text>
</comment>
<comment type="subcellular location">
    <subcellularLocation>
        <location>Cell membrane</location>
        <topology>Multi-pass membrane protein</topology>
    </subcellularLocation>
</comment>
<comment type="similarity">
    <text evidence="2">Belongs to the G-protein coupled receptor 1 family.</text>
</comment>
<keyword id="KW-1003">Cell membrane</keyword>
<keyword id="KW-1015">Disulfide bond</keyword>
<keyword id="KW-0297">G-protein coupled receptor</keyword>
<keyword id="KW-0325">Glycoprotein</keyword>
<keyword id="KW-0449">Lipoprotein</keyword>
<keyword id="KW-0472">Membrane</keyword>
<keyword id="KW-0564">Palmitate</keyword>
<keyword id="KW-0675">Receptor</keyword>
<keyword id="KW-1185">Reference proteome</keyword>
<keyword id="KW-0807">Transducer</keyword>
<keyword id="KW-0812">Transmembrane</keyword>
<keyword id="KW-1133">Transmembrane helix</keyword>
<sequence length="328" mass="36556">MPPSISAFQAAYIGIEVLIALVSVPGNVLVIWAVKVNQALRDATFCFIVSLAVADVAVGALVIPLAILINIGPETYFHTCLMVACPVLILTQSSILALLAIAVDRYLRVKIPLRYKAVVTPRRAAVAIAGCWILSLVVGLTPMFGWNNLREVQRAWAANGSVGEPVIKCEFEKVISMEYMVYFNFFVWVLPPLLLMVLIYLEVFYLIRRQLSKKASASSGDPHKYYGKELKIAKSLALILFLFALSWLPLHILNCVTLFCPSCQKPSILVYTAIFLTHGNSAMNPIVYAFRIHKFRVTFLKIWNDHFRCRPAPAGDGDEDLPEEKPND</sequence>
<dbReference type="EMBL" id="L01700">
    <property type="protein sequence ID" value="AAA31148.1"/>
    <property type="molecule type" value="mRNA"/>
</dbReference>
<dbReference type="PIR" id="JN0675">
    <property type="entry name" value="JN0675"/>
</dbReference>
<dbReference type="RefSeq" id="NP_001164544.1">
    <property type="nucleotide sequence ID" value="NM_001171073.1"/>
</dbReference>
<dbReference type="SMR" id="P34970"/>
<dbReference type="FunCoup" id="P34970">
    <property type="interactions" value="171"/>
</dbReference>
<dbReference type="STRING" id="9986.ENSOCUP00000009475"/>
<dbReference type="BindingDB" id="P34970"/>
<dbReference type="ChEMBL" id="CHEMBL3947"/>
<dbReference type="GlyCosmos" id="P34970">
    <property type="glycosylation" value="1 site, No reported glycans"/>
</dbReference>
<dbReference type="PaxDb" id="9986-ENSOCUP00000009475"/>
<dbReference type="Ensembl" id="ENSOCUT00000011015.3">
    <property type="protein sequence ID" value="ENSOCUP00000009475.3"/>
    <property type="gene ID" value="ENSOCUG00000011017.3"/>
</dbReference>
<dbReference type="GeneID" id="100328615"/>
<dbReference type="KEGG" id="ocu:100328615"/>
<dbReference type="CTD" id="134"/>
<dbReference type="eggNOG" id="KOG3656">
    <property type="taxonomic scope" value="Eukaryota"/>
</dbReference>
<dbReference type="GeneTree" id="ENSGT01030000234555"/>
<dbReference type="InParanoid" id="P34970"/>
<dbReference type="OrthoDB" id="5984709at2759"/>
<dbReference type="Proteomes" id="UP000001811">
    <property type="component" value="Chromosome 16"/>
</dbReference>
<dbReference type="Bgee" id="ENSOCUG00000011017">
    <property type="expression patterns" value="Expressed in brain and 17 other cell types or tissues"/>
</dbReference>
<dbReference type="ExpressionAtlas" id="P34970">
    <property type="expression patterns" value="baseline"/>
</dbReference>
<dbReference type="GO" id="GO:0005929">
    <property type="term" value="C:cilium"/>
    <property type="evidence" value="ECO:0007669"/>
    <property type="project" value="Ensembl"/>
</dbReference>
<dbReference type="GO" id="GO:0043197">
    <property type="term" value="C:dendritic spine"/>
    <property type="evidence" value="ECO:0007669"/>
    <property type="project" value="Ensembl"/>
</dbReference>
<dbReference type="GO" id="GO:0005886">
    <property type="term" value="C:plasma membrane"/>
    <property type="evidence" value="ECO:0007669"/>
    <property type="project" value="UniProtKB-SubCell"/>
</dbReference>
<dbReference type="GO" id="GO:0001609">
    <property type="term" value="F:G protein-coupled adenosine receptor activity"/>
    <property type="evidence" value="ECO:0007669"/>
    <property type="project" value="InterPro"/>
</dbReference>
<dbReference type="GO" id="GO:0060079">
    <property type="term" value="P:excitatory postsynaptic potential"/>
    <property type="evidence" value="ECO:0007669"/>
    <property type="project" value="Ensembl"/>
</dbReference>
<dbReference type="GO" id="GO:0050900">
    <property type="term" value="P:leukocyte migration"/>
    <property type="evidence" value="ECO:0007669"/>
    <property type="project" value="Ensembl"/>
</dbReference>
<dbReference type="GO" id="GO:0060292">
    <property type="term" value="P:long-term synaptic depression"/>
    <property type="evidence" value="ECO:0007669"/>
    <property type="project" value="Ensembl"/>
</dbReference>
<dbReference type="GO" id="GO:0070254">
    <property type="term" value="P:mucus secretion"/>
    <property type="evidence" value="ECO:0007669"/>
    <property type="project" value="Ensembl"/>
</dbReference>
<dbReference type="GO" id="GO:0050728">
    <property type="term" value="P:negative regulation of inflammatory response"/>
    <property type="evidence" value="ECO:0007669"/>
    <property type="project" value="Ensembl"/>
</dbReference>
<dbReference type="GO" id="GO:0002686">
    <property type="term" value="P:negative regulation of leukocyte migration"/>
    <property type="evidence" value="ECO:0007669"/>
    <property type="project" value="Ensembl"/>
</dbReference>
<dbReference type="GO" id="GO:1900453">
    <property type="term" value="P:negative regulation of long-term synaptic depression"/>
    <property type="evidence" value="ECO:0007669"/>
    <property type="project" value="Ensembl"/>
</dbReference>
<dbReference type="GO" id="GO:0070256">
    <property type="term" value="P:negative regulation of mucus secretion"/>
    <property type="evidence" value="ECO:0007669"/>
    <property type="project" value="Ensembl"/>
</dbReference>
<dbReference type="GO" id="GO:0003093">
    <property type="term" value="P:regulation of glomerular filtration"/>
    <property type="evidence" value="ECO:0007669"/>
    <property type="project" value="Ensembl"/>
</dbReference>
<dbReference type="GO" id="GO:0051930">
    <property type="term" value="P:regulation of sensory perception of pain"/>
    <property type="evidence" value="ECO:0007669"/>
    <property type="project" value="Ensembl"/>
</dbReference>
<dbReference type="GO" id="GO:0014074">
    <property type="term" value="P:response to purine-containing compound"/>
    <property type="evidence" value="ECO:0007669"/>
    <property type="project" value="Ensembl"/>
</dbReference>
<dbReference type="CDD" id="cd15071">
    <property type="entry name" value="7tmA_Adenosine_R_A1"/>
    <property type="match status" value="1"/>
</dbReference>
<dbReference type="FunFam" id="1.20.1070.10:FF:000061">
    <property type="entry name" value="Adenosine receptor A2"/>
    <property type="match status" value="1"/>
</dbReference>
<dbReference type="Gene3D" id="1.20.1070.10">
    <property type="entry name" value="Rhodopsin 7-helix transmembrane proteins"/>
    <property type="match status" value="1"/>
</dbReference>
<dbReference type="InterPro" id="IPR001068">
    <property type="entry name" value="Adeno_A1_rcpt"/>
</dbReference>
<dbReference type="InterPro" id="IPR001634">
    <property type="entry name" value="Adenosn_rcpt"/>
</dbReference>
<dbReference type="InterPro" id="IPR000276">
    <property type="entry name" value="GPCR_Rhodpsn"/>
</dbReference>
<dbReference type="InterPro" id="IPR017452">
    <property type="entry name" value="GPCR_Rhodpsn_7TM"/>
</dbReference>
<dbReference type="PANTHER" id="PTHR24246:SF1">
    <property type="entry name" value="ADENOSINE RECEPTOR A1"/>
    <property type="match status" value="1"/>
</dbReference>
<dbReference type="PANTHER" id="PTHR24246">
    <property type="entry name" value="OLFACTORY RECEPTOR AND ADENOSINE RECEPTOR"/>
    <property type="match status" value="1"/>
</dbReference>
<dbReference type="Pfam" id="PF00001">
    <property type="entry name" value="7tm_1"/>
    <property type="match status" value="1"/>
</dbReference>
<dbReference type="PRINTS" id="PR00552">
    <property type="entry name" value="ADENOSINEA1R"/>
</dbReference>
<dbReference type="PRINTS" id="PR00424">
    <property type="entry name" value="ADENOSINER"/>
</dbReference>
<dbReference type="PRINTS" id="PR00237">
    <property type="entry name" value="GPCRRHODOPSN"/>
</dbReference>
<dbReference type="SMART" id="SM01381">
    <property type="entry name" value="7TM_GPCR_Srsx"/>
    <property type="match status" value="1"/>
</dbReference>
<dbReference type="SUPFAM" id="SSF81321">
    <property type="entry name" value="Family A G protein-coupled receptor-like"/>
    <property type="match status" value="1"/>
</dbReference>
<dbReference type="PROSITE" id="PS00237">
    <property type="entry name" value="G_PROTEIN_RECEP_F1_1"/>
    <property type="match status" value="1"/>
</dbReference>
<dbReference type="PROSITE" id="PS50262">
    <property type="entry name" value="G_PROTEIN_RECEP_F1_2"/>
    <property type="match status" value="1"/>
</dbReference>
<organism>
    <name type="scientific">Oryctolagus cuniculus</name>
    <name type="common">Rabbit</name>
    <dbReference type="NCBI Taxonomy" id="9986"/>
    <lineage>
        <taxon>Eukaryota</taxon>
        <taxon>Metazoa</taxon>
        <taxon>Chordata</taxon>
        <taxon>Craniata</taxon>
        <taxon>Vertebrata</taxon>
        <taxon>Euteleostomi</taxon>
        <taxon>Mammalia</taxon>
        <taxon>Eutheria</taxon>
        <taxon>Euarchontoglires</taxon>
        <taxon>Glires</taxon>
        <taxon>Lagomorpha</taxon>
        <taxon>Leporidae</taxon>
        <taxon>Oryctolagus</taxon>
    </lineage>
</organism>
<protein>
    <recommendedName>
        <fullName>Adenosine receptor A1</fullName>
    </recommendedName>
</protein>